<keyword id="KW-0963">Cytoplasm</keyword>
<keyword id="KW-0444">Lipid biosynthesis</keyword>
<keyword id="KW-0443">Lipid metabolism</keyword>
<keyword id="KW-0520">NAD</keyword>
<keyword id="KW-0521">NADP</keyword>
<keyword id="KW-0547">Nucleotide-binding</keyword>
<keyword id="KW-0560">Oxidoreductase</keyword>
<keyword id="KW-0594">Phospholipid biosynthesis</keyword>
<keyword id="KW-1208">Phospholipid metabolism</keyword>
<keyword id="KW-1185">Reference proteome</keyword>
<name>GPDA_BRASO</name>
<evidence type="ECO:0000255" key="1">
    <source>
        <dbReference type="HAMAP-Rule" id="MF_00394"/>
    </source>
</evidence>
<organism>
    <name type="scientific">Bradyrhizobium sp. (strain ORS 278)</name>
    <dbReference type="NCBI Taxonomy" id="114615"/>
    <lineage>
        <taxon>Bacteria</taxon>
        <taxon>Pseudomonadati</taxon>
        <taxon>Pseudomonadota</taxon>
        <taxon>Alphaproteobacteria</taxon>
        <taxon>Hyphomicrobiales</taxon>
        <taxon>Nitrobacteraceae</taxon>
        <taxon>Bradyrhizobium</taxon>
    </lineage>
</organism>
<gene>
    <name evidence="1" type="primary">gpsA</name>
    <name type="ordered locus">BRADO0303</name>
</gene>
<sequence length="327" mass="33198">MSHRFQTIAVVGAGAWGTALAAVAARAGRNVTLYARDADHAVRIATARENPRLPGIPLADSITVTTDLARAARADAILIVVPAQHLRGAVMHLAPLLAPGTPLVACAKGIEHSTHKFMTEVIAEAAPRATPAILSGPSFADDVARGLPTAVTLAAPDEALASALVQALGSSTFRPYHSTDVRGVEIGGAAKNVLAIAAGIVSGRDLGASALAALTTRGFAELVRLGRAYGARSETLTGLSGLGDLILTCAGPQSRNFAAGLALGRGEPLPAGKLAEGQYTAPVLVELAASRGVEMPVAQAVAAILSGTVTIDAAIEALMLRPFKAEE</sequence>
<feature type="chain" id="PRO_1000080299" description="Glycerol-3-phosphate dehydrogenase [NAD(P)+]">
    <location>
        <begin position="1"/>
        <end position="327"/>
    </location>
</feature>
<feature type="active site" description="Proton acceptor" evidence="1">
    <location>
        <position position="191"/>
    </location>
</feature>
<feature type="binding site" evidence="1">
    <location>
        <position position="16"/>
    </location>
    <ligand>
        <name>NADPH</name>
        <dbReference type="ChEBI" id="CHEBI:57783"/>
    </ligand>
</feature>
<feature type="binding site" evidence="1">
    <location>
        <position position="36"/>
    </location>
    <ligand>
        <name>NADPH</name>
        <dbReference type="ChEBI" id="CHEBI:57783"/>
    </ligand>
</feature>
<feature type="binding site" evidence="1">
    <location>
        <position position="108"/>
    </location>
    <ligand>
        <name>NADPH</name>
        <dbReference type="ChEBI" id="CHEBI:57783"/>
    </ligand>
</feature>
<feature type="binding site" evidence="1">
    <location>
        <position position="108"/>
    </location>
    <ligand>
        <name>sn-glycerol 3-phosphate</name>
        <dbReference type="ChEBI" id="CHEBI:57597"/>
    </ligand>
</feature>
<feature type="binding site" evidence="1">
    <location>
        <position position="136"/>
    </location>
    <ligand>
        <name>sn-glycerol 3-phosphate</name>
        <dbReference type="ChEBI" id="CHEBI:57597"/>
    </ligand>
</feature>
<feature type="binding site" evidence="1">
    <location>
        <position position="138"/>
    </location>
    <ligand>
        <name>sn-glycerol 3-phosphate</name>
        <dbReference type="ChEBI" id="CHEBI:57597"/>
    </ligand>
</feature>
<feature type="binding site" evidence="1">
    <location>
        <position position="140"/>
    </location>
    <ligand>
        <name>NADPH</name>
        <dbReference type="ChEBI" id="CHEBI:57783"/>
    </ligand>
</feature>
<feature type="binding site" evidence="1">
    <location>
        <position position="191"/>
    </location>
    <ligand>
        <name>sn-glycerol 3-phosphate</name>
        <dbReference type="ChEBI" id="CHEBI:57597"/>
    </ligand>
</feature>
<feature type="binding site" evidence="1">
    <location>
        <position position="244"/>
    </location>
    <ligand>
        <name>sn-glycerol 3-phosphate</name>
        <dbReference type="ChEBI" id="CHEBI:57597"/>
    </ligand>
</feature>
<feature type="binding site" evidence="1">
    <location>
        <position position="254"/>
    </location>
    <ligand>
        <name>sn-glycerol 3-phosphate</name>
        <dbReference type="ChEBI" id="CHEBI:57597"/>
    </ligand>
</feature>
<feature type="binding site" evidence="1">
    <location>
        <position position="255"/>
    </location>
    <ligand>
        <name>NADPH</name>
        <dbReference type="ChEBI" id="CHEBI:57783"/>
    </ligand>
</feature>
<feature type="binding site" evidence="1">
    <location>
        <position position="255"/>
    </location>
    <ligand>
        <name>sn-glycerol 3-phosphate</name>
        <dbReference type="ChEBI" id="CHEBI:57597"/>
    </ligand>
</feature>
<feature type="binding site" evidence="1">
    <location>
        <position position="256"/>
    </location>
    <ligand>
        <name>sn-glycerol 3-phosphate</name>
        <dbReference type="ChEBI" id="CHEBI:57597"/>
    </ligand>
</feature>
<feature type="binding site" evidence="1">
    <location>
        <position position="274"/>
    </location>
    <ligand>
        <name>NADPH</name>
        <dbReference type="ChEBI" id="CHEBI:57783"/>
    </ligand>
</feature>
<feature type="binding site" evidence="1">
    <location>
        <position position="276"/>
    </location>
    <ligand>
        <name>NADPH</name>
        <dbReference type="ChEBI" id="CHEBI:57783"/>
    </ligand>
</feature>
<proteinExistence type="inferred from homology"/>
<reference key="1">
    <citation type="journal article" date="2007" name="Science">
        <title>Legumes symbioses: absence of nod genes in photosynthetic bradyrhizobia.</title>
        <authorList>
            <person name="Giraud E."/>
            <person name="Moulin L."/>
            <person name="Vallenet D."/>
            <person name="Barbe V."/>
            <person name="Cytryn E."/>
            <person name="Avarre J.-C."/>
            <person name="Jaubert M."/>
            <person name="Simon D."/>
            <person name="Cartieaux F."/>
            <person name="Prin Y."/>
            <person name="Bena G."/>
            <person name="Hannibal L."/>
            <person name="Fardoux J."/>
            <person name="Kojadinovic M."/>
            <person name="Vuillet L."/>
            <person name="Lajus A."/>
            <person name="Cruveiller S."/>
            <person name="Rouy Z."/>
            <person name="Mangenot S."/>
            <person name="Segurens B."/>
            <person name="Dossat C."/>
            <person name="Franck W.L."/>
            <person name="Chang W.-S."/>
            <person name="Saunders E."/>
            <person name="Bruce D."/>
            <person name="Richardson P."/>
            <person name="Normand P."/>
            <person name="Dreyfus B."/>
            <person name="Pignol D."/>
            <person name="Stacey G."/>
            <person name="Emerich D."/>
            <person name="Vermeglio A."/>
            <person name="Medigue C."/>
            <person name="Sadowsky M."/>
        </authorList>
    </citation>
    <scope>NUCLEOTIDE SEQUENCE [LARGE SCALE GENOMIC DNA]</scope>
    <source>
        <strain>ORS 278</strain>
    </source>
</reference>
<comment type="function">
    <text evidence="1">Catalyzes the reduction of the glycolytic intermediate dihydroxyacetone phosphate (DHAP) to sn-glycerol 3-phosphate (G3P), the key precursor for phospholipid synthesis.</text>
</comment>
<comment type="catalytic activity">
    <reaction evidence="1">
        <text>sn-glycerol 3-phosphate + NAD(+) = dihydroxyacetone phosphate + NADH + H(+)</text>
        <dbReference type="Rhea" id="RHEA:11092"/>
        <dbReference type="ChEBI" id="CHEBI:15378"/>
        <dbReference type="ChEBI" id="CHEBI:57540"/>
        <dbReference type="ChEBI" id="CHEBI:57597"/>
        <dbReference type="ChEBI" id="CHEBI:57642"/>
        <dbReference type="ChEBI" id="CHEBI:57945"/>
        <dbReference type="EC" id="1.1.1.94"/>
    </reaction>
    <physiologicalReaction direction="right-to-left" evidence="1">
        <dbReference type="Rhea" id="RHEA:11094"/>
    </physiologicalReaction>
</comment>
<comment type="catalytic activity">
    <reaction evidence="1">
        <text>sn-glycerol 3-phosphate + NADP(+) = dihydroxyacetone phosphate + NADPH + H(+)</text>
        <dbReference type="Rhea" id="RHEA:11096"/>
        <dbReference type="ChEBI" id="CHEBI:15378"/>
        <dbReference type="ChEBI" id="CHEBI:57597"/>
        <dbReference type="ChEBI" id="CHEBI:57642"/>
        <dbReference type="ChEBI" id="CHEBI:57783"/>
        <dbReference type="ChEBI" id="CHEBI:58349"/>
        <dbReference type="EC" id="1.1.1.94"/>
    </reaction>
    <physiologicalReaction direction="right-to-left" evidence="1">
        <dbReference type="Rhea" id="RHEA:11098"/>
    </physiologicalReaction>
</comment>
<comment type="pathway">
    <text evidence="1">Membrane lipid metabolism; glycerophospholipid metabolism.</text>
</comment>
<comment type="subcellular location">
    <subcellularLocation>
        <location evidence="1">Cytoplasm</location>
    </subcellularLocation>
</comment>
<comment type="similarity">
    <text evidence="1">Belongs to the NAD-dependent glycerol-3-phosphate dehydrogenase family.</text>
</comment>
<dbReference type="EC" id="1.1.1.94" evidence="1"/>
<dbReference type="EMBL" id="CU234118">
    <property type="protein sequence ID" value="CAL74260.1"/>
    <property type="molecule type" value="Genomic_DNA"/>
</dbReference>
<dbReference type="RefSeq" id="WP_011923544.1">
    <property type="nucleotide sequence ID" value="NC_009445.1"/>
</dbReference>
<dbReference type="SMR" id="A4YK34"/>
<dbReference type="STRING" id="114615.BRADO0303"/>
<dbReference type="KEGG" id="bra:BRADO0303"/>
<dbReference type="eggNOG" id="COG0240">
    <property type="taxonomic scope" value="Bacteria"/>
</dbReference>
<dbReference type="HOGENOM" id="CLU_033449_0_2_5"/>
<dbReference type="OrthoDB" id="9812273at2"/>
<dbReference type="UniPathway" id="UPA00940"/>
<dbReference type="Proteomes" id="UP000001994">
    <property type="component" value="Chromosome"/>
</dbReference>
<dbReference type="GO" id="GO:0005829">
    <property type="term" value="C:cytosol"/>
    <property type="evidence" value="ECO:0007669"/>
    <property type="project" value="TreeGrafter"/>
</dbReference>
<dbReference type="GO" id="GO:0047952">
    <property type="term" value="F:glycerol-3-phosphate dehydrogenase [NAD(P)+] activity"/>
    <property type="evidence" value="ECO:0007669"/>
    <property type="project" value="UniProtKB-UniRule"/>
</dbReference>
<dbReference type="GO" id="GO:0051287">
    <property type="term" value="F:NAD binding"/>
    <property type="evidence" value="ECO:0007669"/>
    <property type="project" value="InterPro"/>
</dbReference>
<dbReference type="GO" id="GO:0005975">
    <property type="term" value="P:carbohydrate metabolic process"/>
    <property type="evidence" value="ECO:0007669"/>
    <property type="project" value="InterPro"/>
</dbReference>
<dbReference type="GO" id="GO:0046167">
    <property type="term" value="P:glycerol-3-phosphate biosynthetic process"/>
    <property type="evidence" value="ECO:0007669"/>
    <property type="project" value="UniProtKB-UniRule"/>
</dbReference>
<dbReference type="GO" id="GO:0046168">
    <property type="term" value="P:glycerol-3-phosphate catabolic process"/>
    <property type="evidence" value="ECO:0007669"/>
    <property type="project" value="InterPro"/>
</dbReference>
<dbReference type="GO" id="GO:0006650">
    <property type="term" value="P:glycerophospholipid metabolic process"/>
    <property type="evidence" value="ECO:0007669"/>
    <property type="project" value="UniProtKB-UniRule"/>
</dbReference>
<dbReference type="GO" id="GO:0008654">
    <property type="term" value="P:phospholipid biosynthetic process"/>
    <property type="evidence" value="ECO:0007669"/>
    <property type="project" value="UniProtKB-KW"/>
</dbReference>
<dbReference type="FunFam" id="3.40.50.720:FF:000019">
    <property type="entry name" value="Glycerol-3-phosphate dehydrogenase [NAD(P)+]"/>
    <property type="match status" value="1"/>
</dbReference>
<dbReference type="Gene3D" id="1.10.1040.10">
    <property type="entry name" value="N-(1-d-carboxylethyl)-l-norvaline Dehydrogenase, domain 2"/>
    <property type="match status" value="1"/>
</dbReference>
<dbReference type="Gene3D" id="3.40.50.720">
    <property type="entry name" value="NAD(P)-binding Rossmann-like Domain"/>
    <property type="match status" value="1"/>
</dbReference>
<dbReference type="HAMAP" id="MF_00394">
    <property type="entry name" value="NAD_Glyc3P_dehydrog"/>
    <property type="match status" value="1"/>
</dbReference>
<dbReference type="InterPro" id="IPR008927">
    <property type="entry name" value="6-PGluconate_DH-like_C_sf"/>
</dbReference>
<dbReference type="InterPro" id="IPR013328">
    <property type="entry name" value="6PGD_dom2"/>
</dbReference>
<dbReference type="InterPro" id="IPR006168">
    <property type="entry name" value="G3P_DH_NAD-dep"/>
</dbReference>
<dbReference type="InterPro" id="IPR006109">
    <property type="entry name" value="G3P_DH_NAD-dep_C"/>
</dbReference>
<dbReference type="InterPro" id="IPR011128">
    <property type="entry name" value="G3P_DH_NAD-dep_N"/>
</dbReference>
<dbReference type="InterPro" id="IPR036291">
    <property type="entry name" value="NAD(P)-bd_dom_sf"/>
</dbReference>
<dbReference type="NCBIfam" id="NF000940">
    <property type="entry name" value="PRK00094.1-2"/>
    <property type="match status" value="1"/>
</dbReference>
<dbReference type="NCBIfam" id="NF000942">
    <property type="entry name" value="PRK00094.1-4"/>
    <property type="match status" value="1"/>
</dbReference>
<dbReference type="PANTHER" id="PTHR11728">
    <property type="entry name" value="GLYCEROL-3-PHOSPHATE DEHYDROGENASE"/>
    <property type="match status" value="1"/>
</dbReference>
<dbReference type="PANTHER" id="PTHR11728:SF1">
    <property type="entry name" value="GLYCEROL-3-PHOSPHATE DEHYDROGENASE [NAD(+)] 2, CHLOROPLASTIC"/>
    <property type="match status" value="1"/>
</dbReference>
<dbReference type="Pfam" id="PF07479">
    <property type="entry name" value="NAD_Gly3P_dh_C"/>
    <property type="match status" value="1"/>
</dbReference>
<dbReference type="Pfam" id="PF01210">
    <property type="entry name" value="NAD_Gly3P_dh_N"/>
    <property type="match status" value="1"/>
</dbReference>
<dbReference type="PIRSF" id="PIRSF000114">
    <property type="entry name" value="Glycerol-3-P_dh"/>
    <property type="match status" value="1"/>
</dbReference>
<dbReference type="PRINTS" id="PR00077">
    <property type="entry name" value="GPDHDRGNASE"/>
</dbReference>
<dbReference type="SUPFAM" id="SSF48179">
    <property type="entry name" value="6-phosphogluconate dehydrogenase C-terminal domain-like"/>
    <property type="match status" value="1"/>
</dbReference>
<dbReference type="SUPFAM" id="SSF51735">
    <property type="entry name" value="NAD(P)-binding Rossmann-fold domains"/>
    <property type="match status" value="1"/>
</dbReference>
<dbReference type="PROSITE" id="PS00957">
    <property type="entry name" value="NAD_G3PDH"/>
    <property type="match status" value="1"/>
</dbReference>
<protein>
    <recommendedName>
        <fullName evidence="1">Glycerol-3-phosphate dehydrogenase [NAD(P)+]</fullName>
        <ecNumber evidence="1">1.1.1.94</ecNumber>
    </recommendedName>
    <alternativeName>
        <fullName evidence="1">NAD(P)(+)-dependent glycerol-3-phosphate dehydrogenase</fullName>
    </alternativeName>
    <alternativeName>
        <fullName evidence="1">NAD(P)H-dependent dihydroxyacetone-phosphate reductase</fullName>
    </alternativeName>
</protein>
<accession>A4YK34</accession>